<protein>
    <recommendedName>
        <fullName>Protein HIR1</fullName>
    </recommendedName>
</protein>
<organism>
    <name type="scientific">Gibberella zeae (strain ATCC MYA-4620 / CBS 123657 / FGSC 9075 / NRRL 31084 / PH-1)</name>
    <name type="common">Wheat head blight fungus</name>
    <name type="synonym">Fusarium graminearum</name>
    <dbReference type="NCBI Taxonomy" id="229533"/>
    <lineage>
        <taxon>Eukaryota</taxon>
        <taxon>Fungi</taxon>
        <taxon>Dikarya</taxon>
        <taxon>Ascomycota</taxon>
        <taxon>Pezizomycotina</taxon>
        <taxon>Sordariomycetes</taxon>
        <taxon>Hypocreomycetidae</taxon>
        <taxon>Hypocreales</taxon>
        <taxon>Nectriaceae</taxon>
        <taxon>Fusarium</taxon>
    </lineage>
</organism>
<name>HIR1_GIBZE</name>
<reference key="1">
    <citation type="journal article" date="2007" name="Science">
        <title>The Fusarium graminearum genome reveals a link between localized polymorphism and pathogen specialization.</title>
        <authorList>
            <person name="Cuomo C.A."/>
            <person name="Gueldener U."/>
            <person name="Xu J.-R."/>
            <person name="Trail F."/>
            <person name="Turgeon B.G."/>
            <person name="Di Pietro A."/>
            <person name="Walton J.D."/>
            <person name="Ma L.-J."/>
            <person name="Baker S.E."/>
            <person name="Rep M."/>
            <person name="Adam G."/>
            <person name="Antoniw J."/>
            <person name="Baldwin T."/>
            <person name="Calvo S.E."/>
            <person name="Chang Y.-L."/>
            <person name="DeCaprio D."/>
            <person name="Gale L.R."/>
            <person name="Gnerre S."/>
            <person name="Goswami R.S."/>
            <person name="Hammond-Kosack K."/>
            <person name="Harris L.J."/>
            <person name="Hilburn K."/>
            <person name="Kennell J.C."/>
            <person name="Kroken S."/>
            <person name="Magnuson J.K."/>
            <person name="Mannhaupt G."/>
            <person name="Mauceli E.W."/>
            <person name="Mewes H.-W."/>
            <person name="Mitterbauer R."/>
            <person name="Muehlbauer G."/>
            <person name="Muensterkoetter M."/>
            <person name="Nelson D."/>
            <person name="O'Donnell K."/>
            <person name="Ouellet T."/>
            <person name="Qi W."/>
            <person name="Quesneville H."/>
            <person name="Roncero M.I.G."/>
            <person name="Seong K.-Y."/>
            <person name="Tetko I.V."/>
            <person name="Urban M."/>
            <person name="Waalwijk C."/>
            <person name="Ward T.J."/>
            <person name="Yao J."/>
            <person name="Birren B.W."/>
            <person name="Kistler H.C."/>
        </authorList>
    </citation>
    <scope>NUCLEOTIDE SEQUENCE [LARGE SCALE GENOMIC DNA]</scope>
    <source>
        <strain>ATCC MYA-4620 / CBS 123657 / FGSC 9075 / NRRL 31084 / PH-1</strain>
    </source>
</reference>
<reference key="2">
    <citation type="journal article" date="2010" name="Nature">
        <title>Comparative genomics reveals mobile pathogenicity chromosomes in Fusarium.</title>
        <authorList>
            <person name="Ma L.-J."/>
            <person name="van der Does H.C."/>
            <person name="Borkovich K.A."/>
            <person name="Coleman J.J."/>
            <person name="Daboussi M.-J."/>
            <person name="Di Pietro A."/>
            <person name="Dufresne M."/>
            <person name="Freitag M."/>
            <person name="Grabherr M."/>
            <person name="Henrissat B."/>
            <person name="Houterman P.M."/>
            <person name="Kang S."/>
            <person name="Shim W.-B."/>
            <person name="Woloshuk C."/>
            <person name="Xie X."/>
            <person name="Xu J.-R."/>
            <person name="Antoniw J."/>
            <person name="Baker S.E."/>
            <person name="Bluhm B.H."/>
            <person name="Breakspear A."/>
            <person name="Brown D.W."/>
            <person name="Butchko R.A.E."/>
            <person name="Chapman S."/>
            <person name="Coulson R."/>
            <person name="Coutinho P.M."/>
            <person name="Danchin E.G.J."/>
            <person name="Diener A."/>
            <person name="Gale L.R."/>
            <person name="Gardiner D.M."/>
            <person name="Goff S."/>
            <person name="Hammond-Kosack K.E."/>
            <person name="Hilburn K."/>
            <person name="Hua-Van A."/>
            <person name="Jonkers W."/>
            <person name="Kazan K."/>
            <person name="Kodira C.D."/>
            <person name="Koehrsen M."/>
            <person name="Kumar L."/>
            <person name="Lee Y.-H."/>
            <person name="Li L."/>
            <person name="Manners J.M."/>
            <person name="Miranda-Saavedra D."/>
            <person name="Mukherjee M."/>
            <person name="Park G."/>
            <person name="Park J."/>
            <person name="Park S.-Y."/>
            <person name="Proctor R.H."/>
            <person name="Regev A."/>
            <person name="Ruiz-Roldan M.C."/>
            <person name="Sain D."/>
            <person name="Sakthikumar S."/>
            <person name="Sykes S."/>
            <person name="Schwartz D.C."/>
            <person name="Turgeon B.G."/>
            <person name="Wapinski I."/>
            <person name="Yoder O."/>
            <person name="Young S."/>
            <person name="Zeng Q."/>
            <person name="Zhou S."/>
            <person name="Galagan J."/>
            <person name="Cuomo C.A."/>
            <person name="Kistler H.C."/>
            <person name="Rep M."/>
        </authorList>
    </citation>
    <scope>GENOME REANNOTATION</scope>
    <source>
        <strain>ATCC MYA-4620 / CBS 123657 / FGSC 9075 / NRRL 31084 / PH-1</strain>
    </source>
</reference>
<reference key="3">
    <citation type="journal article" date="2015" name="BMC Genomics">
        <title>The completed genome sequence of the pathogenic ascomycete fungus Fusarium graminearum.</title>
        <authorList>
            <person name="King R."/>
            <person name="Urban M."/>
            <person name="Hammond-Kosack M.C.U."/>
            <person name="Hassani-Pak K."/>
            <person name="Hammond-Kosack K.E."/>
        </authorList>
    </citation>
    <scope>NUCLEOTIDE SEQUENCE [LARGE SCALE GENOMIC DNA]</scope>
    <source>
        <strain>ATCC MYA-4620 / CBS 123657 / FGSC 9075 / NRRL 31084 / PH-1</strain>
    </source>
</reference>
<gene>
    <name type="primary">HIR1</name>
    <name type="ORF">FGRRES_05344</name>
    <name type="ORF">FGSG_05344</name>
</gene>
<proteinExistence type="inferred from homology"/>
<dbReference type="EMBL" id="DS231665">
    <property type="protein sequence ID" value="ESU11288.1"/>
    <property type="molecule type" value="Genomic_DNA"/>
</dbReference>
<dbReference type="EMBL" id="HG970334">
    <property type="protein sequence ID" value="CEF88174.1"/>
    <property type="molecule type" value="Genomic_DNA"/>
</dbReference>
<dbReference type="RefSeq" id="XP_011323864.1">
    <property type="nucleotide sequence ID" value="XM_011325562.1"/>
</dbReference>
<dbReference type="SMR" id="Q4IBR4"/>
<dbReference type="FunCoup" id="Q4IBR4">
    <property type="interactions" value="175"/>
</dbReference>
<dbReference type="STRING" id="229533.Q4IBR4"/>
<dbReference type="GeneID" id="23552530"/>
<dbReference type="KEGG" id="fgr:FGSG_05344"/>
<dbReference type="VEuPathDB" id="FungiDB:FGRAMPH1_01G17681"/>
<dbReference type="eggNOG" id="KOG0973">
    <property type="taxonomic scope" value="Eukaryota"/>
</dbReference>
<dbReference type="HOGENOM" id="CLU_004372_3_1_1"/>
<dbReference type="InParanoid" id="Q4IBR4"/>
<dbReference type="OrthoDB" id="93732at110618"/>
<dbReference type="Proteomes" id="UP000070720">
    <property type="component" value="Chromosome 3"/>
</dbReference>
<dbReference type="GO" id="GO:0000785">
    <property type="term" value="C:chromatin"/>
    <property type="evidence" value="ECO:0007669"/>
    <property type="project" value="TreeGrafter"/>
</dbReference>
<dbReference type="GO" id="GO:0000417">
    <property type="term" value="C:HIR complex"/>
    <property type="evidence" value="ECO:0007669"/>
    <property type="project" value="TreeGrafter"/>
</dbReference>
<dbReference type="GO" id="GO:0005634">
    <property type="term" value="C:nucleus"/>
    <property type="evidence" value="ECO:0007669"/>
    <property type="project" value="UniProtKB-SubCell"/>
</dbReference>
<dbReference type="GO" id="GO:0031491">
    <property type="term" value="F:nucleosome binding"/>
    <property type="evidence" value="ECO:0007669"/>
    <property type="project" value="TreeGrafter"/>
</dbReference>
<dbReference type="GO" id="GO:0006338">
    <property type="term" value="P:chromatin remodeling"/>
    <property type="evidence" value="ECO:0007669"/>
    <property type="project" value="InterPro"/>
</dbReference>
<dbReference type="GO" id="GO:0006351">
    <property type="term" value="P:DNA-templated transcription"/>
    <property type="evidence" value="ECO:0007669"/>
    <property type="project" value="InterPro"/>
</dbReference>
<dbReference type="GO" id="GO:0006355">
    <property type="term" value="P:regulation of DNA-templated transcription"/>
    <property type="evidence" value="ECO:0007669"/>
    <property type="project" value="InterPro"/>
</dbReference>
<dbReference type="CDD" id="cd00200">
    <property type="entry name" value="WD40"/>
    <property type="match status" value="1"/>
</dbReference>
<dbReference type="FunFam" id="2.130.10.10:FF:000290">
    <property type="entry name" value="Protein HIR"/>
    <property type="match status" value="1"/>
</dbReference>
<dbReference type="FunFam" id="2.130.10.10:FF:001557">
    <property type="entry name" value="Protein HIR"/>
    <property type="match status" value="1"/>
</dbReference>
<dbReference type="Gene3D" id="2.130.10.10">
    <property type="entry name" value="YVTN repeat-like/Quinoprotein amine dehydrogenase"/>
    <property type="match status" value="2"/>
</dbReference>
<dbReference type="InterPro" id="IPR055410">
    <property type="entry name" value="CAF1B_HIR1_beta-prop"/>
</dbReference>
<dbReference type="InterPro" id="IPR031120">
    <property type="entry name" value="HIR1-like"/>
</dbReference>
<dbReference type="InterPro" id="IPR011494">
    <property type="entry name" value="HIRA-like_C"/>
</dbReference>
<dbReference type="InterPro" id="IPR019015">
    <property type="entry name" value="HIRA_B_motif"/>
</dbReference>
<dbReference type="InterPro" id="IPR015943">
    <property type="entry name" value="WD40/YVTN_repeat-like_dom_sf"/>
</dbReference>
<dbReference type="InterPro" id="IPR036322">
    <property type="entry name" value="WD40_repeat_dom_sf"/>
</dbReference>
<dbReference type="InterPro" id="IPR001680">
    <property type="entry name" value="WD40_rpt"/>
</dbReference>
<dbReference type="PANTHER" id="PTHR13831">
    <property type="entry name" value="MEMBER OF THE HIR1 FAMILY OF WD-REPEAT PROTEINS"/>
    <property type="match status" value="1"/>
</dbReference>
<dbReference type="PANTHER" id="PTHR13831:SF0">
    <property type="entry name" value="PROTEIN HIRA"/>
    <property type="match status" value="1"/>
</dbReference>
<dbReference type="Pfam" id="PF24105">
    <property type="entry name" value="Beta-prop_CAF1B_HIR1"/>
    <property type="match status" value="1"/>
</dbReference>
<dbReference type="Pfam" id="PF07569">
    <property type="entry name" value="Hira"/>
    <property type="match status" value="1"/>
</dbReference>
<dbReference type="Pfam" id="PF09453">
    <property type="entry name" value="HIRA_B"/>
    <property type="match status" value="1"/>
</dbReference>
<dbReference type="SMART" id="SM00320">
    <property type="entry name" value="WD40"/>
    <property type="match status" value="6"/>
</dbReference>
<dbReference type="SUPFAM" id="SSF63829">
    <property type="entry name" value="Calcium-dependent phosphotriesterase"/>
    <property type="match status" value="1"/>
</dbReference>
<dbReference type="SUPFAM" id="SSF50978">
    <property type="entry name" value="WD40 repeat-like"/>
    <property type="match status" value="1"/>
</dbReference>
<dbReference type="PROSITE" id="PS00678">
    <property type="entry name" value="WD_REPEATS_1"/>
    <property type="match status" value="1"/>
</dbReference>
<dbReference type="PROSITE" id="PS50082">
    <property type="entry name" value="WD_REPEATS_2"/>
    <property type="match status" value="4"/>
</dbReference>
<dbReference type="PROSITE" id="PS50294">
    <property type="entry name" value="WD_REPEATS_REGION"/>
    <property type="match status" value="2"/>
</dbReference>
<evidence type="ECO:0000250" key="1"/>
<evidence type="ECO:0000256" key="2">
    <source>
        <dbReference type="SAM" id="MobiDB-lite"/>
    </source>
</evidence>
<evidence type="ECO:0000305" key="3"/>
<sequence>MHIIKPSWLSHCGEQKDFEVYSCHVSPDGKRLATAGGDGHVRVWSTESIYNANTPDYNKPRQLCHMSHHLGTIHSVRFSPNGRYLASGADDKIICVYHLDKNPPAATFGTNEPPPIENWKTYKRLIGHDNDVQDLAWSYDSSILVSVGLDSKVVVWSGHTFEKLKTLPAHQSHVKGITFDPANKFFATASDDRTIKIFRFTSPAPNATQHDMVNNFVLETTISSPFKSSPLTTYFRRCSWSPDGNHIAAANAVNGPVSSVAIIERTRWDSEINLIGHEAPTEVCMFSPRLFHTSKPDPSVDDKSPSLVTVIASAGQDKTLSIWNTNTSRPVVILQDLAGKSVSDLAWTPDGQTLFASSLDGSIVVAKFSEGELGWVAQPEENDKALQKYGASRKGMGIAEDVDGLMLENQSKAGESRAVESRMGALMGDLPDSTKESTPVTNGTKTTAPTSKPATNGQSEAEKDKEPEKEQEKEPEEAADKTAQRVKELKSRVTVGKDGKKRVAPLLVSSSGTGTSSLPQTQLVGTTSNNKAAQNDAPQTTLDLAKPFDGLPKGGIAAMLLGNKRRLNLGEAEEEEEPVSKRAATGPTTIVTNGHDSVEPAALVPVQHGVVPTPEFLRPAVMNPSIAFAQVRLAVPKIRSHVLRPLDRGILQGESSLEDASKTPENIILEAKNDPNPRDPSHVLVSKRGALIWEEWLPRAIILVTATKQFWAVACEDGSIHTWTPAGRRLLAPIILESQPVILEARGHWLLCITAVGLAHVWDLKTQSSPSPPVSLGPILDIATTSLNQHSATPGPGVTSAHLNSTGHIIVTLTNGDGYYYAREMFTWQRLSEAWWAVGSQYWNSNDSSISALQSTAVGPASKEGKDKESTKATVSSGIIPFLERHTTNEFLLKGRAYGLQRIIKMVVQRKEAENLESSVSIAHLETRIAGALQLGAREEFRLYLFTYAKRLGAEGARVKVEELLNSLLGGILEENEEEEDEDDGHGWFSKEGDLCGWDRKELLKDVVMILGKYRELQRLTLQYAKVLDISLEDGPVDVEQMDVEA</sequence>
<keyword id="KW-0156">Chromatin regulator</keyword>
<keyword id="KW-0539">Nucleus</keyword>
<keyword id="KW-1185">Reference proteome</keyword>
<keyword id="KW-0677">Repeat</keyword>
<keyword id="KW-0678">Repressor</keyword>
<keyword id="KW-0804">Transcription</keyword>
<keyword id="KW-0805">Transcription regulation</keyword>
<keyword id="KW-0853">WD repeat</keyword>
<accession>Q4IBR4</accession>
<accession>A0A0E0SP11</accession>
<accession>V6R9I7</accession>
<feature type="chain" id="PRO_0000286412" description="Protein HIR1">
    <location>
        <begin position="1"/>
        <end position="1046"/>
    </location>
</feature>
<feature type="repeat" description="WD 1">
    <location>
        <begin position="15"/>
        <end position="54"/>
    </location>
</feature>
<feature type="repeat" description="WD 2">
    <location>
        <begin position="68"/>
        <end position="107"/>
    </location>
</feature>
<feature type="repeat" description="WD 3">
    <location>
        <begin position="127"/>
        <end position="166"/>
    </location>
</feature>
<feature type="repeat" description="WD 4">
    <location>
        <begin position="169"/>
        <end position="208"/>
    </location>
</feature>
<feature type="repeat" description="WD 5">
    <location>
        <begin position="230"/>
        <end position="273"/>
    </location>
</feature>
<feature type="repeat" description="WD 6">
    <location>
        <begin position="292"/>
        <end position="333"/>
    </location>
</feature>
<feature type="repeat" description="WD 7">
    <location>
        <begin position="337"/>
        <end position="378"/>
    </location>
</feature>
<feature type="region of interest" description="Disordered" evidence="2">
    <location>
        <begin position="426"/>
        <end position="497"/>
    </location>
</feature>
<feature type="compositionally biased region" description="Low complexity" evidence="2">
    <location>
        <begin position="444"/>
        <end position="455"/>
    </location>
</feature>
<feature type="compositionally biased region" description="Basic and acidic residues" evidence="2">
    <location>
        <begin position="460"/>
        <end position="497"/>
    </location>
</feature>
<comment type="function">
    <text evidence="1">Required for replication-independent chromatin assembly and for the periodic repression of histone gene transcription during the cell cycle.</text>
</comment>
<comment type="subcellular location">
    <subcellularLocation>
        <location evidence="1">Nucleus</location>
    </subcellularLocation>
</comment>
<comment type="similarity">
    <text evidence="3">Belongs to the WD repeat HIR1 family.</text>
</comment>